<comment type="function">
    <text evidence="8">Core component of nucleosome. Nucleosomes wrap and compact DNA into chromatin, limiting DNA accessibility to the cellular machineries which require DNA as a template. Histones thereby play a central role in transcription regulation, DNA repair, DNA replication and chromosomal stability. DNA accessibility is regulated via a complex set of post-translational modifications of histones, also called histone code, and nucleosome remodeling. Hominid-specific H3.5/H3F3C preferentially colocalizes with euchromatin, and it is associated with actively transcribed genes.</text>
</comment>
<comment type="subunit">
    <text>The nucleosome is a histone octamer containing two molecules each of H2A, H2B, H3 and H4 assembled in one H3-H4 heterotetramer and two H2A-H2B heterodimers. The octamer wraps approximately 147 bp of DNA.</text>
</comment>
<comment type="interaction">
    <interactant intactId="EBI-2868501">
        <id>Q6NXT2</id>
    </interactant>
    <interactant intactId="EBI-10988864">
        <id>P46379-2</id>
        <label>BAG6</label>
    </interactant>
    <organismsDiffer>false</organismsDiffer>
    <experiments>3</experiments>
</comment>
<comment type="interaction">
    <interactant intactId="EBI-2868501">
        <id>Q6NXT2</id>
    </interactant>
    <interactant intactId="EBI-718729">
        <id>P55212</id>
        <label>CASP6</label>
    </interactant>
    <organismsDiffer>false</organismsDiffer>
    <experiments>3</experiments>
</comment>
<comment type="interaction">
    <interactant intactId="EBI-2868501">
        <id>Q6NXT2</id>
    </interactant>
    <interactant intactId="EBI-6624398">
        <id>P06307</id>
        <label>CCK</label>
    </interactant>
    <organismsDiffer>false</organismsDiffer>
    <experiments>3</experiments>
</comment>
<comment type="interaction">
    <interactant intactId="EBI-2868501">
        <id>Q6NXT2</id>
    </interactant>
    <interactant intactId="EBI-21553822">
        <id>Q96A83-2</id>
        <label>COL26A1</label>
    </interactant>
    <organismsDiffer>false</organismsDiffer>
    <experiments>3</experiments>
</comment>
<comment type="interaction">
    <interactant intactId="EBI-2868501">
        <id>Q6NXT2</id>
    </interactant>
    <interactant intactId="EBI-77321">
        <id>Q9UER7</id>
        <label>DAXX</label>
    </interactant>
    <organismsDiffer>false</organismsDiffer>
    <experiments>3</experiments>
</comment>
<comment type="interaction">
    <interactant intactId="EBI-2868501">
        <id>Q6NXT2</id>
    </interactant>
    <interactant intactId="EBI-12593112">
        <id>O75190-2</id>
        <label>DNAJB6</label>
    </interactant>
    <organismsDiffer>false</organismsDiffer>
    <experiments>3</experiments>
</comment>
<comment type="interaction">
    <interactant intactId="EBI-2868501">
        <id>Q6NXT2</id>
    </interactant>
    <interactant intactId="EBI-2349100">
        <id>Q8WXX5</id>
        <label>DNAJC9</label>
    </interactant>
    <organismsDiffer>false</organismsDiffer>
    <experiments>3</experiments>
</comment>
<comment type="interaction">
    <interactant intactId="EBI-2868501">
        <id>Q6NXT2</id>
    </interactant>
    <interactant intactId="EBI-750300">
        <id>Q01658</id>
        <label>DR1</label>
    </interactant>
    <organismsDiffer>false</organismsDiffer>
    <experiments>3</experiments>
</comment>
<comment type="interaction">
    <interactant intactId="EBI-2868501">
        <id>Q6NXT2</id>
    </interactant>
    <interactant intactId="EBI-3864120">
        <id>Q8WUP2</id>
        <label>FBLIM1</label>
    </interactant>
    <organismsDiffer>false</organismsDiffer>
    <experiments>3</experiments>
</comment>
<comment type="interaction">
    <interactant intactId="EBI-2868501">
        <id>Q6NXT2</id>
    </interactant>
    <interactant intactId="EBI-747754">
        <id>P28799</id>
        <label>GRN</label>
    </interactant>
    <organismsDiffer>false</organismsDiffer>
    <experiments>3</experiments>
</comment>
<comment type="interaction">
    <interactant intactId="EBI-2868501">
        <id>Q6NXT2</id>
    </interactant>
    <interactant intactId="EBI-1054873">
        <id>Q9Y5Q9</id>
        <label>GTF3C3</label>
    </interactant>
    <organismsDiffer>false</organismsDiffer>
    <experiments>3</experiments>
</comment>
<comment type="interaction">
    <interactant intactId="EBI-2868501">
        <id>Q6NXT2</id>
    </interactant>
    <interactant intactId="EBI-712096">
        <id>P30519</id>
        <label>HMOX2</label>
    </interactant>
    <organismsDiffer>false</organismsDiffer>
    <experiments>3</experiments>
</comment>
<comment type="interaction">
    <interactant intactId="EBI-2868501">
        <id>Q6NXT2</id>
    </interactant>
    <interactant intactId="EBI-466029">
        <id>P42858</id>
        <label>HTT</label>
    </interactant>
    <organismsDiffer>false</organismsDiffer>
    <experiments>15</experiments>
</comment>
<comment type="interaction">
    <interactant intactId="EBI-2868501">
        <id>Q6NXT2</id>
    </interactant>
    <interactant intactId="EBI-6398041">
        <id>Q9UMF0</id>
        <label>ICAM5</label>
    </interactant>
    <organismsDiffer>false</organismsDiffer>
    <experiments>3</experiments>
</comment>
<comment type="interaction">
    <interactant intactId="EBI-2868501">
        <id>Q6NXT2</id>
    </interactant>
    <interactant intactId="EBI-10975473">
        <id>O60333-2</id>
        <label>KIF1B</label>
    </interactant>
    <organismsDiffer>false</organismsDiffer>
    <experiments>3</experiments>
</comment>
<comment type="interaction">
    <interactant intactId="EBI-2868501">
        <id>Q6NXT2</id>
    </interactant>
    <interactant intactId="EBI-948266">
        <id>O14901</id>
        <label>KLF11</label>
    </interactant>
    <organismsDiffer>false</organismsDiffer>
    <experiments>3</experiments>
</comment>
<comment type="interaction">
    <interactant intactId="EBI-2868501">
        <id>Q6NXT2</id>
    </interactant>
    <interactant intactId="EBI-21591415">
        <id>P13473-2</id>
        <label>LAMP2</label>
    </interactant>
    <organismsDiffer>false</organismsDiffer>
    <experiments>3</experiments>
</comment>
<comment type="interaction">
    <interactant intactId="EBI-2868501">
        <id>Q6NXT2</id>
    </interactant>
    <interactant intactId="EBI-4314821">
        <id>Q13449</id>
        <label>LSAMP</label>
    </interactant>
    <organismsDiffer>false</organismsDiffer>
    <experiments>3</experiments>
</comment>
<comment type="interaction">
    <interactant intactId="EBI-2868501">
        <id>Q6NXT2</id>
    </interactant>
    <interactant intactId="EBI-7038920">
        <id>P49321-2</id>
        <label>NASP</label>
    </interactant>
    <organismsDiffer>false</organismsDiffer>
    <experiments>11</experiments>
</comment>
<comment type="interaction">
    <interactant intactId="EBI-2868501">
        <id>Q6NXT2</id>
    </interactant>
    <interactant intactId="EBI-286642">
        <id>P62826</id>
        <label>RAN</label>
    </interactant>
    <organismsDiffer>false</organismsDiffer>
    <experiments>3</experiments>
</comment>
<comment type="interaction">
    <interactant intactId="EBI-2868501">
        <id>Q6NXT2</id>
    </interactant>
    <interactant intactId="EBI-396669">
        <id>Q9Y3C5</id>
        <label>RNF11</label>
    </interactant>
    <organismsDiffer>false</organismsDiffer>
    <experiments>3</experiments>
</comment>
<comment type="interaction">
    <interactant intactId="EBI-2868501">
        <id>Q6NXT2</id>
    </interactant>
    <interactant intactId="EBI-2623095">
        <id>Q9Y371</id>
        <label>SH3GLB1</label>
    </interactant>
    <organismsDiffer>false</organismsDiffer>
    <experiments>3</experiments>
</comment>
<comment type="interaction">
    <interactant intactId="EBI-2868501">
        <id>Q6NXT2</id>
    </interactant>
    <interactant intactId="EBI-720609">
        <id>O76024</id>
        <label>WFS1</label>
    </interactant>
    <organismsDiffer>false</organismsDiffer>
    <experiments>3</experiments>
</comment>
<comment type="subcellular location">
    <subcellularLocation>
        <location>Nucleus</location>
    </subcellularLocation>
    <subcellularLocation>
        <location>Chromosome</location>
    </subcellularLocation>
</comment>
<comment type="tissue specificity">
    <text evidence="8">Specifically expressed in the seminiferous tubules of testis.</text>
</comment>
<comment type="PTM">
    <text evidence="4">Acetylation is generally linked to gene activation. Acetylation on Lys-10 (H3K9ac) impairs methylation at Arg-9 (H3R8me2s). Acetylation on Lys-19 (H3K18ac) and Lys-24 (H3K24ac) favors methylation at Arg-18 (H3R17me). Acetylation at Lys-122 (H3K122ac) by EP300/p300 plays a central role in chromatin structure: localizes at the surface of the histone octamer and stimulates transcription, possibly by promoting nucleosome instability (By similarity).</text>
</comment>
<comment type="PTM">
    <text evidence="4">Citrullination at Arg-9 (H3R8ci) and/or Arg-18 (H3R17ci) by PADI4 impairs methylation and represses transcription.</text>
</comment>
<comment type="PTM">
    <text evidence="4">Asymmetric dimethylation at Arg-18 (H3R17me2a) by CARM1 is linked to gene activation. Symmetric dimethylation at Arg-9 (H3R8me2s) by PRMT5 is linked to gene repression. Asymmetric dimethylation at Arg-3 (H3R2me2a) by PRMT6 is linked to gene repression and is mutually exclusive with H3 Lys-5 methylation (H3K4me2 and H3K4me3). H3R2me2a is present at the 3' of genes regardless of their transcription state and is enriched on inactive promoters, while it is absent on active promoters (By similarity).</text>
</comment>
<comment type="PTM">
    <text evidence="4">Methylation at Lys-5 (H3K4me) is linked to gene activation. Methylation at Lys-5 (H3K4me) facilitates subsequent acetylation of H3 and H4. Methylation at Lys-10 (H3K9me) and Lys-28 (H3K27me) are linked to gene repression. Methylation at Lys-10 (H3K9me) is a specific target for HP1 proteins (CBX1, CBX3 and CBX5) and prevents subsequent phosphorylation at Ser-11 (H3S10ph) and acetylation of H3 and H4. Methylation at Lys-5 (H3K4me) requires preliminary monoubiquitination of H2B at 'Lys-120'. Methylation at Lys-10 (H3K9me) and Lys-28 (H3K27me) are enriched in inactive X chromosome chromatin. Monomethylation at Lys-56 (H3K56me1) by EHMT2/G9A in G1 phase promotes interaction with PCNA and is required for DNA replication (By similarity).</text>
</comment>
<comment type="PTM">
    <text evidence="4">Phosphorylated at Thr-4 (H3T3ph) by HASPIN during prophase and dephosphorylated during anaphase. Phosphorylation at Ser-11 (H3S10ph) by AURKB is crucial for chromosome condensation and cell-cycle progression during mitosis and meiosis. In addition phosphorylation at Ser-11 (H3S10ph) by RPS6KA4 and RPS6KA5 is important during interphase because it enables the transcription of genes following external stimulation, like mitogens, stress, growth factors or UV irradiation and result in the activation of genes, such as c-fos and c-jun. Phosphorylation at Ser-11 (H3S10ph), which is linked to gene activation, prevents methylation at Lys-10 (H3K9me) but facilitates acetylation of H3 and H4. Phosphorylation at Ser-11 (H3S10ph) by AURKB mediates the dissociation of HP1 proteins (CBX1, CBX3 and CBX5) from heterochromatin. Phosphorylation at Ser-11 (H3S10ph) is also an essential regulatory mechanism for neoplastic cell transformation. Phosphorylated at Ser-29 (H3S28ph) by MAP3K20 isoform 1, RPS6KA5 or AURKB during mitosis or upon ultraviolet B irradiation. Phosphorylation at Thr-7 (H3T6ph) by PRKCB is a specific tag for epigenetic transcriptional activation that prevents demethylation of Lys-5 (H3K4me) by LSD1/KDM1A. At centromeres, specifically phosphorylated at Thr-12 (H3T11ph) from prophase to early anaphase, by DAPK3 and PKN1. Phosphorylation at Thr-12 (H3T11ph) by PKN1 or isoform M2 of PKM (PKM2) is a specific tag for epigenetic transcriptional activation that promotes demethylation of Lys-10 (H3K9me) by KDM4C/JMJD2C. Phosphorylation at Tyr-41 (H3Y41ph) by JAK2 promotes exclusion of CBX5 (HP1 alpha) from chromatin (By similarity).</text>
</comment>
<comment type="PTM">
    <text evidence="4">Lysine deamination at Lys-5 (H3K4all) to form allysine is mediated by LOXL2. Allysine formation by LOXL2 only takes place on H3K4me3 and results in gene repression (By similarity).</text>
</comment>
<comment type="PTM">
    <text evidence="3">Butyrylation of histones marks active promoters and competes with histone acetylation. It is present during late spermatogenesis.</text>
</comment>
<comment type="PTM">
    <text evidence="4">Succinylated. Desuccinylation at Lys-122 (H3K122succ) by SIRT7 in response to DNA damage promotes chromatin condensation and double-strand breaks (DSBs) repair.</text>
</comment>
<comment type="PTM">
    <text evidence="1">Serine ADP-ribosylation constitutes the primary form of ADP-ribosylation of proteins in response to DNA damage. Serine ADP-ribosylation at Ser-11 (H3S10ADPr) is mutually exclusive with phosphorylation at Ser-11 (H3S10ph) and impairs acetylation at Lys-10 (H3K9ac).</text>
</comment>
<comment type="similarity">
    <text evidence="9">Belongs to the histone H3 family.</text>
</comment>
<gene>
    <name evidence="10" type="primary">H3-5</name>
    <name evidence="10" type="synonym">H3F3C</name>
</gene>
<proteinExistence type="evidence at protein level"/>
<name>H3C_HUMAN</name>
<keyword id="KW-0002">3D-structure</keyword>
<keyword id="KW-0007">Acetylation</keyword>
<keyword id="KW-0013">ADP-ribosylation</keyword>
<keyword id="KW-0158">Chromosome</keyword>
<keyword id="KW-0164">Citrullination</keyword>
<keyword id="KW-0238">DNA-binding</keyword>
<keyword id="KW-0379">Hydroxylation</keyword>
<keyword id="KW-0488">Methylation</keyword>
<keyword id="KW-0544">Nucleosome core</keyword>
<keyword id="KW-0539">Nucleus</keyword>
<keyword id="KW-0597">Phosphoprotein</keyword>
<keyword id="KW-1267">Proteomics identification</keyword>
<keyword id="KW-1185">Reference proteome</keyword>
<keyword id="KW-0832">Ubl conjugation</keyword>
<feature type="initiator methionine" description="Removed" evidence="9">
    <location>
        <position position="1"/>
    </location>
</feature>
<feature type="chain" id="PRO_0000253960" description="Histone H3.3C">
    <location>
        <begin position="2"/>
        <end position="135"/>
    </location>
</feature>
<feature type="region of interest" description="Disordered" evidence="6">
    <location>
        <begin position="1"/>
        <end position="41"/>
    </location>
</feature>
<feature type="modified residue" description="Asymmetric dimethylarginine; by PRMT6; alternate" evidence="1">
    <location>
        <position position="3"/>
    </location>
</feature>
<feature type="modified residue" description="Citrulline; alternate" evidence="4">
    <location>
        <position position="3"/>
    </location>
</feature>
<feature type="modified residue" description="Phosphothreonine; by HASPIN" evidence="1">
    <location>
        <position position="4"/>
    </location>
</feature>
<feature type="modified residue" description="Allysine; alternate" evidence="4">
    <location>
        <position position="5"/>
    </location>
</feature>
<feature type="modified residue" description="N6,N6,N6-trimethyllysine; alternate" evidence="1">
    <location>
        <position position="5"/>
    </location>
</feature>
<feature type="modified residue" description="N6,N6-dimethyllysine; alternate" evidence="1">
    <location>
        <position position="5"/>
    </location>
</feature>
<feature type="modified residue" description="N6-(2-hydroxyisobutyryl)lysine; alternate" evidence="1">
    <location>
        <position position="5"/>
    </location>
</feature>
<feature type="modified residue" description="N6-(beta-hydroxybutyryl)lysine; alternate" evidence="3">
    <location>
        <position position="5"/>
    </location>
</feature>
<feature type="modified residue" description="N6-acetyllysine; alternate" evidence="1">
    <location>
        <position position="5"/>
    </location>
</feature>
<feature type="modified residue" description="N6-methyllysine; alternate" evidence="1">
    <location>
        <position position="5"/>
    </location>
</feature>
<feature type="modified residue" description="5-glutamyl dopamine; alternate" evidence="1">
    <location>
        <position position="6"/>
    </location>
</feature>
<feature type="modified residue" description="5-glutamyl serotonin; alternate" evidence="1">
    <location>
        <position position="6"/>
    </location>
</feature>
<feature type="modified residue" description="Phosphothreonine; by PKC" evidence="1">
    <location>
        <position position="7"/>
    </location>
</feature>
<feature type="modified residue" description="Citrulline; alternate" evidence="4">
    <location>
        <position position="9"/>
    </location>
</feature>
<feature type="modified residue" description="Symmetric dimethylarginine; by PRMT5; alternate" evidence="3">
    <location>
        <position position="9"/>
    </location>
</feature>
<feature type="modified residue" description="N6,N6,N6-trimethyllysine; alternate" evidence="2">
    <location>
        <position position="10"/>
    </location>
</feature>
<feature type="modified residue" description="N6,N6-dimethyllysine; alternate" evidence="2">
    <location>
        <position position="10"/>
    </location>
</feature>
<feature type="modified residue" description="N6-(2-hydroxyisobutyryl)lysine; alternate" evidence="1">
    <location>
        <position position="10"/>
    </location>
</feature>
<feature type="modified residue" description="N6-(beta-hydroxybutyryl)lysine; alternate" evidence="3">
    <location>
        <position position="10"/>
    </location>
</feature>
<feature type="modified residue" description="N6-acetyllysine; alternate" evidence="1">
    <location>
        <position position="10"/>
    </location>
</feature>
<feature type="modified residue" description="N6-lactoyllysine; alternate" evidence="1">
    <location>
        <position position="10"/>
    </location>
</feature>
<feature type="modified residue" description="N6-methyllysine; alternate" evidence="2">
    <location>
        <position position="10"/>
    </location>
</feature>
<feature type="modified residue" description="ADP-ribosylserine; alternate" evidence="1">
    <location>
        <position position="11"/>
    </location>
</feature>
<feature type="modified residue" description="Phosphoserine; alternate; by AURKB, AURKC, RPS6KA3, RPS6KA4 and RPS6KA5" evidence="2">
    <location>
        <position position="11"/>
    </location>
</feature>
<feature type="modified residue" description="Phosphothreonine; by PKC" evidence="1">
    <location>
        <position position="12"/>
    </location>
</feature>
<feature type="modified residue" description="N6-(2-hydroxyisobutyryl)lysine; alternate" evidence="1">
    <location>
        <position position="15"/>
    </location>
</feature>
<feature type="modified residue" description="N6-(beta-hydroxybutyryl)lysine; alternate" evidence="3">
    <location>
        <position position="15"/>
    </location>
</feature>
<feature type="modified residue" description="N6-acetyllysine; alternate" evidence="2">
    <location>
        <position position="15"/>
    </location>
</feature>
<feature type="modified residue" description="N6-glutaryllysine; alternate" evidence="4">
    <location>
        <position position="15"/>
    </location>
</feature>
<feature type="modified residue" description="N6-lactoyllysine; alternate" evidence="3">
    <location>
        <position position="15"/>
    </location>
</feature>
<feature type="modified residue" description="N6-succinyllysine; alternate" evidence="1">
    <location>
        <position position="15"/>
    </location>
</feature>
<feature type="modified residue" description="Asymmetric dimethylarginine; by CARM1; alternate" evidence="1">
    <location>
        <position position="18"/>
    </location>
</feature>
<feature type="modified residue" description="Citrulline; alternate" evidence="4">
    <location>
        <position position="18"/>
    </location>
</feature>
<feature type="modified residue" description="N6-(2-hydroxyisobutyryl)lysine; alternate" evidence="1">
    <location>
        <position position="19"/>
    </location>
</feature>
<feature type="modified residue" description="N6-(beta-hydroxybutyryl)lysine; alternate" evidence="3">
    <location>
        <position position="19"/>
    </location>
</feature>
<feature type="modified residue" description="N6-acetyllysine; alternate" evidence="1">
    <location>
        <position position="19"/>
    </location>
</feature>
<feature type="modified residue" description="N6-butyryllysine; alternate" evidence="3">
    <location>
        <position position="19"/>
    </location>
</feature>
<feature type="modified residue" description="N6-glutaryllysine; alternate" evidence="4">
    <location>
        <position position="19"/>
    </location>
</feature>
<feature type="modified residue" description="N6-lactoyllysine; alternate" evidence="1">
    <location>
        <position position="19"/>
    </location>
</feature>
<feature type="modified residue" description="N6-methyllysine; alternate" evidence="1">
    <location>
        <position position="19"/>
    </location>
</feature>
<feature type="modified residue" description="N6-(2-hydroxyisobutyryl)lysine; alternate" evidence="1">
    <location>
        <position position="24"/>
    </location>
</feature>
<feature type="modified residue" description="N6-(beta-hydroxybutyryl)lysine; alternate" evidence="3">
    <location>
        <position position="24"/>
    </location>
</feature>
<feature type="modified residue" description="N6-acetyllysine; alternate" evidence="2">
    <location>
        <position position="24"/>
    </location>
</feature>
<feature type="modified residue" description="N6-butyryllysine; alternate" evidence="3">
    <location>
        <position position="24"/>
    </location>
</feature>
<feature type="modified residue" description="N6-glutaryllysine; alternate" evidence="4">
    <location>
        <position position="24"/>
    </location>
</feature>
<feature type="modified residue" description="N6-lactoyllysine; alternate" evidence="1">
    <location>
        <position position="24"/>
    </location>
</feature>
<feature type="modified residue" description="N6-methyllysine; alternate" evidence="1">
    <location>
        <position position="24"/>
    </location>
</feature>
<feature type="modified residue" description="Citrulline" evidence="4">
    <location>
        <position position="27"/>
    </location>
</feature>
<feature type="modified residue" description="N6,N6,N6-trimethyllysine; alternate" evidence="2">
    <location>
        <position position="28"/>
    </location>
</feature>
<feature type="modified residue" description="N6,N6-dimethyllysine; alternate" evidence="2">
    <location>
        <position position="28"/>
    </location>
</feature>
<feature type="modified residue" description="N6-(2-hydroxyisobutyryl)lysine; alternate" evidence="1">
    <location>
        <position position="28"/>
    </location>
</feature>
<feature type="modified residue" description="N6-acetyllysine; alternate" evidence="1">
    <location>
        <position position="28"/>
    </location>
</feature>
<feature type="modified residue" description="N6-glutaryllysine; alternate" evidence="4">
    <location>
        <position position="28"/>
    </location>
</feature>
<feature type="modified residue" description="N6-lactoyllysine; alternate" evidence="1">
    <location>
        <position position="28"/>
    </location>
</feature>
<feature type="modified residue" description="N6-methyllysine; alternate" evidence="2">
    <location>
        <position position="28"/>
    </location>
</feature>
<feature type="modified residue" description="ADP-ribosylserine; alternate" evidence="1">
    <location>
        <position position="29"/>
    </location>
</feature>
<feature type="modified residue" description="Phosphoserine; alternate; by AURKB, AURKC and RPS6KA5" evidence="2">
    <location>
        <position position="29"/>
    </location>
</feature>
<feature type="modified residue" description="Phosphoserine" evidence="4">
    <location>
        <position position="32"/>
    </location>
</feature>
<feature type="modified residue" description="N6-methyllysine" evidence="1">
    <location>
        <position position="37"/>
    </location>
</feature>
<feature type="modified residue" description="Phosphotyrosine" evidence="1">
    <location>
        <position position="41"/>
    </location>
</feature>
<feature type="modified residue" description="N6,N6,N6-trimethyllysine; alternate" evidence="1">
    <location>
        <position position="56"/>
    </location>
</feature>
<feature type="modified residue" description="N6-(2-hydroxyisobutyryl)lysine; alternate" evidence="1">
    <location>
        <position position="56"/>
    </location>
</feature>
<feature type="modified residue" description="N6-(beta-hydroxybutyryl)lysine; alternate" evidence="3">
    <location>
        <position position="56"/>
    </location>
</feature>
<feature type="modified residue" description="N6-acetyllysine; alternate" evidence="1">
    <location>
        <position position="56"/>
    </location>
</feature>
<feature type="modified residue" description="N6-glutaryllysine; alternate" evidence="4">
    <location>
        <position position="56"/>
    </location>
</feature>
<feature type="modified residue" description="N6-lactoyllysine; alternate" evidence="3">
    <location>
        <position position="56"/>
    </location>
</feature>
<feature type="modified residue" description="N6-methyllysine; by EHMT2; alternate" evidence="1">
    <location>
        <position position="56"/>
    </location>
</feature>
<feature type="modified residue" description="N6-succinyllysine; alternate" evidence="1">
    <location>
        <position position="56"/>
    </location>
</feature>
<feature type="modified residue" description="Phosphoserine" evidence="7">
    <location>
        <position position="57"/>
    </location>
</feature>
<feature type="modified residue" description="N6-(2-hydroxyisobutyryl)lysine; alternate" evidence="1">
    <location>
        <position position="64"/>
    </location>
</feature>
<feature type="modified residue" description="N6-methyllysine; alternate" evidence="1">
    <location>
        <position position="64"/>
    </location>
</feature>
<feature type="modified residue" description="Phosphothreonine" evidence="7">
    <location>
        <position position="80"/>
    </location>
</feature>
<feature type="modified residue" description="Phosphoserine" evidence="4">
    <location>
        <position position="86"/>
    </location>
</feature>
<feature type="modified residue" description="Phosphothreonine" evidence="5">
    <location>
        <position position="107"/>
    </location>
</feature>
<feature type="modified residue" description="N6-acetyllysine" evidence="1">
    <location>
        <position position="115"/>
    </location>
</feature>
<feature type="modified residue" description="N6-glutaryllysine; alternate" evidence="4">
    <location>
        <position position="115"/>
    </location>
</feature>
<feature type="modified residue" description="N6-(2-hydroxyisobutyryl)lysine; alternate" evidence="1">
    <location>
        <position position="122"/>
    </location>
</feature>
<feature type="modified residue" description="N6-acetyllysine; alternate" evidence="1">
    <location>
        <position position="122"/>
    </location>
</feature>
<feature type="modified residue" description="N6-glutaryllysine; alternate" evidence="4">
    <location>
        <position position="122"/>
    </location>
</feature>
<feature type="modified residue" description="N6-methyllysine; alternate" evidence="1">
    <location>
        <position position="122"/>
    </location>
</feature>
<feature type="modified residue" description="N6-succinyllysine; alternate" evidence="1">
    <location>
        <position position="122"/>
    </location>
</feature>
<feature type="sequence variant" id="VAR_068164" description="In dbSNP:rs3759295.">
    <original>H</original>
    <variation>R</variation>
    <location>
        <position position="39"/>
    </location>
</feature>
<feature type="sequence conflict" description="In Ref. 1; ADW85800 and 3; AAH66906." evidence="9" ref="1 3">
    <original>A</original>
    <variation>V</variation>
    <location>
        <position position="88"/>
    </location>
</feature>
<feature type="strand" evidence="11">
    <location>
        <begin position="4"/>
        <end position="7"/>
    </location>
</feature>
<feature type="helix" evidence="12">
    <location>
        <begin position="45"/>
        <end position="56"/>
    </location>
</feature>
<feature type="helix" evidence="12">
    <location>
        <begin position="64"/>
        <end position="78"/>
    </location>
</feature>
<feature type="helix" evidence="12">
    <location>
        <begin position="86"/>
        <end position="113"/>
    </location>
</feature>
<feature type="strand" evidence="12">
    <location>
        <begin position="117"/>
        <end position="119"/>
    </location>
</feature>
<feature type="helix" evidence="12">
    <location>
        <begin position="121"/>
        <end position="130"/>
    </location>
</feature>
<accession>Q6NXT2</accession>
<accession>E9P281</accession>
<sequence>MARTKQTARKSTGGKAPRKQLATKAARKSTPSTCGVKPHRYRPGTVALREIRRYQKSTELLIRKLPFQRLVREIAQDFNTDLRFQSAAVGALQEASEAYLVGLLEDTNLCAIHAKRVTIMPKDIQLARRIRGERA</sequence>
<organism>
    <name type="scientific">Homo sapiens</name>
    <name type="common">Human</name>
    <dbReference type="NCBI Taxonomy" id="9606"/>
    <lineage>
        <taxon>Eukaryota</taxon>
        <taxon>Metazoa</taxon>
        <taxon>Chordata</taxon>
        <taxon>Craniata</taxon>
        <taxon>Vertebrata</taxon>
        <taxon>Euteleostomi</taxon>
        <taxon>Mammalia</taxon>
        <taxon>Eutheria</taxon>
        <taxon>Euarchontoglires</taxon>
        <taxon>Primates</taxon>
        <taxon>Haplorrhini</taxon>
        <taxon>Catarrhini</taxon>
        <taxon>Hominidae</taxon>
        <taxon>Homo</taxon>
    </lineage>
</organism>
<protein>
    <recommendedName>
        <fullName>Histone H3.3C</fullName>
    </recommendedName>
    <alternativeName>
        <fullName evidence="10">Histone H3.5</fullName>
    </alternativeName>
</protein>
<dbReference type="EMBL" id="HQ873957">
    <property type="protein sequence ID" value="ADW85800.1"/>
    <property type="molecule type" value="mRNA"/>
</dbReference>
<dbReference type="EMBL" id="AC023050">
    <property type="status" value="NOT_ANNOTATED_CDS"/>
    <property type="molecule type" value="Genomic_DNA"/>
</dbReference>
<dbReference type="EMBL" id="BC066906">
    <property type="protein sequence ID" value="AAH66906.1"/>
    <property type="molecule type" value="mRNA"/>
</dbReference>
<dbReference type="CCDS" id="CCDS31769.1"/>
<dbReference type="RefSeq" id="NP_001013721.2">
    <property type="nucleotide sequence ID" value="NM_001013699.3"/>
</dbReference>
<dbReference type="PDB" id="2PUY">
    <property type="method" value="X-ray"/>
    <property type="resolution" value="1.43 A"/>
    <property type="chains" value="E=2-11"/>
</dbReference>
<dbReference type="PDB" id="3KV4">
    <property type="method" value="X-ray"/>
    <property type="resolution" value="2.19 A"/>
    <property type="chains" value="B=2-25"/>
</dbReference>
<dbReference type="PDB" id="4Z5T">
    <property type="method" value="X-ray"/>
    <property type="resolution" value="2.80 A"/>
    <property type="chains" value="A/E=1-135"/>
</dbReference>
<dbReference type="PDB" id="5BWN">
    <property type="method" value="X-ray"/>
    <property type="resolution" value="1.94 A"/>
    <property type="chains" value="B=6-14"/>
</dbReference>
<dbReference type="PDB" id="5BWO">
    <property type="method" value="X-ray"/>
    <property type="resolution" value="2.38 A"/>
    <property type="chains" value="B=6-14"/>
</dbReference>
<dbReference type="PDB" id="5F6K">
    <property type="method" value="X-ray"/>
    <property type="resolution" value="2.41 A"/>
    <property type="chains" value="M=2-10"/>
</dbReference>
<dbReference type="PDB" id="5I3L">
    <property type="method" value="X-ray"/>
    <property type="resolution" value="1.85 A"/>
    <property type="chains" value="C=2-21"/>
</dbReference>
<dbReference type="PDB" id="6OI3">
    <property type="method" value="X-ray"/>
    <property type="resolution" value="1.66 A"/>
    <property type="chains" value="B=2-22"/>
</dbReference>
<dbReference type="PDB" id="7TRL">
    <property type="method" value="X-ray"/>
    <property type="resolution" value="1.74 A"/>
    <property type="chains" value="B=2-13"/>
</dbReference>
<dbReference type="PDB" id="7W67">
    <property type="method" value="X-ray"/>
    <property type="resolution" value="2.19 A"/>
    <property type="chains" value="M=2-10"/>
</dbReference>
<dbReference type="PDB" id="7W6I">
    <property type="method" value="X-ray"/>
    <property type="resolution" value="2.56 A"/>
    <property type="chains" value="B=2-10"/>
</dbReference>
<dbReference type="PDB" id="7W6J">
    <property type="method" value="X-ray"/>
    <property type="resolution" value="2.68 A"/>
    <property type="chains" value="B=2-10"/>
</dbReference>
<dbReference type="PDB" id="7W6L">
    <property type="method" value="X-ray"/>
    <property type="resolution" value="2.26 A"/>
    <property type="chains" value="M=2-10"/>
</dbReference>
<dbReference type="PDB" id="7Y0I">
    <property type="method" value="NMR"/>
    <property type="chains" value="B=2-16"/>
</dbReference>
<dbReference type="PDB" id="7ZEZ">
    <property type="method" value="NMR"/>
    <property type="chains" value="D=2-14"/>
</dbReference>
<dbReference type="PDB" id="8Q1G">
    <property type="method" value="X-ray"/>
    <property type="resolution" value="2.60 A"/>
    <property type="chains" value="C=2-22"/>
</dbReference>
<dbReference type="PDB" id="8Q1H">
    <property type="method" value="X-ray"/>
    <property type="resolution" value="2.90 A"/>
    <property type="chains" value="C=2-22"/>
</dbReference>
<dbReference type="PDB" id="8Q1J">
    <property type="method" value="X-ray"/>
    <property type="resolution" value="2.87 A"/>
    <property type="chains" value="C=2-22"/>
</dbReference>
<dbReference type="PDB" id="8RBX">
    <property type="method" value="EM"/>
    <property type="resolution" value="4.10 A"/>
    <property type="chains" value="M/S=1-135"/>
</dbReference>
<dbReference type="PDB" id="8SR6">
    <property type="method" value="X-ray"/>
    <property type="resolution" value="2.22 A"/>
    <property type="chains" value="B=4-18"/>
</dbReference>
<dbReference type="PDB" id="8T4F">
    <property type="method" value="EM"/>
    <property type="resolution" value="3.50 A"/>
    <property type="chains" value="C=52-60"/>
</dbReference>
<dbReference type="PDB" id="8T4R">
    <property type="method" value="X-ray"/>
    <property type="resolution" value="1.20 A"/>
    <property type="chains" value="D=2-14"/>
</dbReference>
<dbReference type="PDB" id="8ZXC">
    <property type="method" value="NMR"/>
    <property type="chains" value="B=2-13"/>
</dbReference>
<dbReference type="PDB" id="9C0O">
    <property type="method" value="X-ray"/>
    <property type="resolution" value="1.53 A"/>
    <property type="chains" value="D=2-16"/>
</dbReference>
<dbReference type="PDB" id="9DZN">
    <property type="method" value="X-ray"/>
    <property type="resolution" value="1.72 A"/>
    <property type="chains" value="C=6-24"/>
</dbReference>
<dbReference type="PDBsum" id="2PUY"/>
<dbReference type="PDBsum" id="3KV4"/>
<dbReference type="PDBsum" id="4Z5T"/>
<dbReference type="PDBsum" id="5BWN"/>
<dbReference type="PDBsum" id="5BWO"/>
<dbReference type="PDBsum" id="5F6K"/>
<dbReference type="PDBsum" id="5I3L"/>
<dbReference type="PDBsum" id="6OI3"/>
<dbReference type="PDBsum" id="7TRL"/>
<dbReference type="PDBsum" id="7W67"/>
<dbReference type="PDBsum" id="7W6I"/>
<dbReference type="PDBsum" id="7W6J"/>
<dbReference type="PDBsum" id="7W6L"/>
<dbReference type="PDBsum" id="7Y0I"/>
<dbReference type="PDBsum" id="7ZEZ"/>
<dbReference type="PDBsum" id="8Q1G"/>
<dbReference type="PDBsum" id="8Q1H"/>
<dbReference type="PDBsum" id="8Q1J"/>
<dbReference type="PDBsum" id="8RBX"/>
<dbReference type="PDBsum" id="8SR6"/>
<dbReference type="PDBsum" id="8T4F"/>
<dbReference type="PDBsum" id="8T4R"/>
<dbReference type="PDBsum" id="8ZXC"/>
<dbReference type="PDBsum" id="9C0O"/>
<dbReference type="PDBsum" id="9DZN"/>
<dbReference type="EMDB" id="EMD-19038"/>
<dbReference type="EMDB" id="EMD-41029"/>
<dbReference type="SMR" id="Q6NXT2"/>
<dbReference type="BioGRID" id="136289">
    <property type="interactions" value="122"/>
</dbReference>
<dbReference type="FunCoup" id="Q6NXT2">
    <property type="interactions" value="331"/>
</dbReference>
<dbReference type="IntAct" id="Q6NXT2">
    <property type="interactions" value="47"/>
</dbReference>
<dbReference type="MINT" id="Q6NXT2"/>
<dbReference type="STRING" id="9606.ENSP00000339835"/>
<dbReference type="GlyGen" id="Q6NXT2">
    <property type="glycosylation" value="1 site, 1 O-linked glycan (1 site)"/>
</dbReference>
<dbReference type="iPTMnet" id="Q6NXT2"/>
<dbReference type="PhosphoSitePlus" id="Q6NXT2"/>
<dbReference type="SwissPalm" id="Q6NXT2"/>
<dbReference type="BioMuta" id="H3F3C"/>
<dbReference type="DMDM" id="116248097"/>
<dbReference type="jPOST" id="Q6NXT2"/>
<dbReference type="MassIVE" id="Q6NXT2"/>
<dbReference type="PaxDb" id="9606-ENSP00000339835"/>
<dbReference type="PeptideAtlas" id="Q6NXT2"/>
<dbReference type="ProteomicsDB" id="66771"/>
<dbReference type="Pumba" id="Q6NXT2"/>
<dbReference type="TopDownProteomics" id="Q6NXT2"/>
<dbReference type="Antibodypedia" id="55173">
    <property type="antibodies" value="25 antibodies from 14 providers"/>
</dbReference>
<dbReference type="DNASU" id="440093"/>
<dbReference type="Ensembl" id="ENST00000340398.5">
    <property type="protein sequence ID" value="ENSP00000339835.3"/>
    <property type="gene ID" value="ENSG00000188375.5"/>
</dbReference>
<dbReference type="GeneID" id="440093"/>
<dbReference type="KEGG" id="hsa:440093"/>
<dbReference type="MANE-Select" id="ENST00000340398.5">
    <property type="protein sequence ID" value="ENSP00000339835.3"/>
    <property type="RefSeq nucleotide sequence ID" value="NM_001013699.3"/>
    <property type="RefSeq protein sequence ID" value="NP_001013721.2"/>
</dbReference>
<dbReference type="UCSC" id="uc001rkr.3">
    <property type="organism name" value="human"/>
</dbReference>
<dbReference type="AGR" id="HGNC:33164"/>
<dbReference type="CTD" id="440093"/>
<dbReference type="DisGeNET" id="440093"/>
<dbReference type="GeneCards" id="H3-5"/>
<dbReference type="HGNC" id="HGNC:33164">
    <property type="gene designation" value="H3-5"/>
</dbReference>
<dbReference type="HPA" id="ENSG00000188375">
    <property type="expression patterns" value="Tissue enriched (testis)"/>
</dbReference>
<dbReference type="MalaCards" id="H3-5"/>
<dbReference type="MIM" id="616134">
    <property type="type" value="gene"/>
</dbReference>
<dbReference type="neXtProt" id="NX_Q6NXT2"/>
<dbReference type="OpenTargets" id="ENSG00000188375"/>
<dbReference type="VEuPathDB" id="HostDB:ENSG00000188375"/>
<dbReference type="eggNOG" id="KOG1745">
    <property type="taxonomic scope" value="Eukaryota"/>
</dbReference>
<dbReference type="GeneTree" id="ENSGT01110000267215"/>
<dbReference type="HOGENOM" id="CLU_078295_4_0_1"/>
<dbReference type="InParanoid" id="Q6NXT2"/>
<dbReference type="OrthoDB" id="9609993at2759"/>
<dbReference type="PAN-GO" id="Q6NXT2">
    <property type="GO annotations" value="1 GO annotation based on evolutionary models"/>
</dbReference>
<dbReference type="PhylomeDB" id="Q6NXT2"/>
<dbReference type="TreeFam" id="TF314241"/>
<dbReference type="PathwayCommons" id="Q6NXT2"/>
<dbReference type="SignaLink" id="Q6NXT2"/>
<dbReference type="SIGNOR" id="Q6NXT2"/>
<dbReference type="BioGRID-ORCS" id="440093">
    <property type="hits" value="52 hits in 1079 CRISPR screens"/>
</dbReference>
<dbReference type="ChiTaRS" id="H3F3C">
    <property type="organism name" value="human"/>
</dbReference>
<dbReference type="EvolutionaryTrace" id="Q6NXT2"/>
<dbReference type="GenomeRNAi" id="440093"/>
<dbReference type="Pharos" id="Q6NXT2">
    <property type="development level" value="Tbio"/>
</dbReference>
<dbReference type="PRO" id="PR:Q6NXT2"/>
<dbReference type="Proteomes" id="UP000005640">
    <property type="component" value="Chromosome 12"/>
</dbReference>
<dbReference type="RNAct" id="Q6NXT2">
    <property type="molecule type" value="protein"/>
</dbReference>
<dbReference type="Bgee" id="ENSG00000188375">
    <property type="expression patterns" value="Expressed in left testis and 79 other cell types or tissues"/>
</dbReference>
<dbReference type="GO" id="GO:0000791">
    <property type="term" value="C:euchromatin"/>
    <property type="evidence" value="ECO:0000314"/>
    <property type="project" value="UniProtKB"/>
</dbReference>
<dbReference type="GO" id="GO:0005654">
    <property type="term" value="C:nucleoplasm"/>
    <property type="evidence" value="ECO:0000314"/>
    <property type="project" value="HPA"/>
</dbReference>
<dbReference type="GO" id="GO:0000786">
    <property type="term" value="C:nucleosome"/>
    <property type="evidence" value="ECO:0007669"/>
    <property type="project" value="UniProtKB-KW"/>
</dbReference>
<dbReference type="GO" id="GO:0005634">
    <property type="term" value="C:nucleus"/>
    <property type="evidence" value="ECO:0000318"/>
    <property type="project" value="GO_Central"/>
</dbReference>
<dbReference type="GO" id="GO:0031492">
    <property type="term" value="F:nucleosomal DNA binding"/>
    <property type="evidence" value="ECO:0000314"/>
    <property type="project" value="UniProtKB"/>
</dbReference>
<dbReference type="GO" id="GO:0046982">
    <property type="term" value="F:protein heterodimerization activity"/>
    <property type="evidence" value="ECO:0007669"/>
    <property type="project" value="InterPro"/>
</dbReference>
<dbReference type="GO" id="GO:0030527">
    <property type="term" value="F:structural constituent of chromatin"/>
    <property type="evidence" value="ECO:0007669"/>
    <property type="project" value="InterPro"/>
</dbReference>
<dbReference type="GO" id="GO:0030307">
    <property type="term" value="P:positive regulation of cell growth"/>
    <property type="evidence" value="ECO:0000315"/>
    <property type="project" value="UniProtKB"/>
</dbReference>
<dbReference type="CDD" id="cd22911">
    <property type="entry name" value="HFD_H3"/>
    <property type="match status" value="1"/>
</dbReference>
<dbReference type="FunFam" id="1.10.20.10:FF:000078">
    <property type="entry name" value="Histone H3"/>
    <property type="match status" value="1"/>
</dbReference>
<dbReference type="FunFam" id="1.10.20.10:FF:000044">
    <property type="entry name" value="Histone H3.3"/>
    <property type="match status" value="1"/>
</dbReference>
<dbReference type="Gene3D" id="1.10.20.10">
    <property type="entry name" value="Histone, subunit A"/>
    <property type="match status" value="1"/>
</dbReference>
<dbReference type="InterPro" id="IPR009072">
    <property type="entry name" value="Histone-fold"/>
</dbReference>
<dbReference type="InterPro" id="IPR007125">
    <property type="entry name" value="Histone_H2A/H2B/H3"/>
</dbReference>
<dbReference type="InterPro" id="IPR000164">
    <property type="entry name" value="Histone_H3/CENP-A"/>
</dbReference>
<dbReference type="PANTHER" id="PTHR11426">
    <property type="entry name" value="HISTONE H3"/>
    <property type="match status" value="1"/>
</dbReference>
<dbReference type="Pfam" id="PF00125">
    <property type="entry name" value="Histone"/>
    <property type="match status" value="1"/>
</dbReference>
<dbReference type="PRINTS" id="PR00622">
    <property type="entry name" value="HISTONEH3"/>
</dbReference>
<dbReference type="SMART" id="SM00428">
    <property type="entry name" value="H3"/>
    <property type="match status" value="1"/>
</dbReference>
<dbReference type="SUPFAM" id="SSF47113">
    <property type="entry name" value="Histone-fold"/>
    <property type="match status" value="1"/>
</dbReference>
<dbReference type="PROSITE" id="PS00322">
    <property type="entry name" value="HISTONE_H3_1"/>
    <property type="match status" value="1"/>
</dbReference>
<dbReference type="PROSITE" id="PS00959">
    <property type="entry name" value="HISTONE_H3_2"/>
    <property type="match status" value="1"/>
</dbReference>
<reference key="1">
    <citation type="journal article" date="2011" name="Chromosoma">
        <title>H3.5 is a novel hominid-specific histone H3 variant that is specifically expressed in the seminiferous tubules of human testes.</title>
        <authorList>
            <person name="Schenk R."/>
            <person name="Jenke A."/>
            <person name="Zilbauer M."/>
            <person name="Wirth S."/>
            <person name="Postberg J."/>
        </authorList>
    </citation>
    <scope>NUCLEOTIDE SEQUENCE [MRNA]</scope>
    <scope>FUNCTION</scope>
    <scope>TISSUE SPECIFICITY</scope>
    <source>
        <tissue>Seminiferous tubule</tissue>
    </source>
</reference>
<reference key="2">
    <citation type="journal article" date="2006" name="Nature">
        <title>The finished DNA sequence of human chromosome 12.</title>
        <authorList>
            <person name="Scherer S.E."/>
            <person name="Muzny D.M."/>
            <person name="Buhay C.J."/>
            <person name="Chen R."/>
            <person name="Cree A."/>
            <person name="Ding Y."/>
            <person name="Dugan-Rocha S."/>
            <person name="Gill R."/>
            <person name="Gunaratne P."/>
            <person name="Harris R.A."/>
            <person name="Hawes A.C."/>
            <person name="Hernandez J."/>
            <person name="Hodgson A.V."/>
            <person name="Hume J."/>
            <person name="Jackson A."/>
            <person name="Khan Z.M."/>
            <person name="Kovar-Smith C."/>
            <person name="Lewis L.R."/>
            <person name="Lozado R.J."/>
            <person name="Metzker M.L."/>
            <person name="Milosavljevic A."/>
            <person name="Miner G.R."/>
            <person name="Montgomery K.T."/>
            <person name="Morgan M.B."/>
            <person name="Nazareth L.V."/>
            <person name="Scott G."/>
            <person name="Sodergren E."/>
            <person name="Song X.-Z."/>
            <person name="Steffen D."/>
            <person name="Lovering R.C."/>
            <person name="Wheeler D.A."/>
            <person name="Worley K.C."/>
            <person name="Yuan Y."/>
            <person name="Zhang Z."/>
            <person name="Adams C.Q."/>
            <person name="Ansari-Lari M.A."/>
            <person name="Ayele M."/>
            <person name="Brown M.J."/>
            <person name="Chen G."/>
            <person name="Chen Z."/>
            <person name="Clerc-Blankenburg K.P."/>
            <person name="Davis C."/>
            <person name="Delgado O."/>
            <person name="Dinh H.H."/>
            <person name="Draper H."/>
            <person name="Gonzalez-Garay M.L."/>
            <person name="Havlak P."/>
            <person name="Jackson L.R."/>
            <person name="Jacob L.S."/>
            <person name="Kelly S.H."/>
            <person name="Li L."/>
            <person name="Li Z."/>
            <person name="Liu J."/>
            <person name="Liu W."/>
            <person name="Lu J."/>
            <person name="Maheshwari M."/>
            <person name="Nguyen B.-V."/>
            <person name="Okwuonu G.O."/>
            <person name="Pasternak S."/>
            <person name="Perez L.M."/>
            <person name="Plopper F.J.H."/>
            <person name="Santibanez J."/>
            <person name="Shen H."/>
            <person name="Tabor P.E."/>
            <person name="Verduzco D."/>
            <person name="Waldron L."/>
            <person name="Wang Q."/>
            <person name="Williams G.A."/>
            <person name="Zhang J."/>
            <person name="Zhou J."/>
            <person name="Allen C.C."/>
            <person name="Amin A.G."/>
            <person name="Anyalebechi V."/>
            <person name="Bailey M."/>
            <person name="Barbaria J.A."/>
            <person name="Bimage K.E."/>
            <person name="Bryant N.P."/>
            <person name="Burch P.E."/>
            <person name="Burkett C.E."/>
            <person name="Burrell K.L."/>
            <person name="Calderon E."/>
            <person name="Cardenas V."/>
            <person name="Carter K."/>
            <person name="Casias K."/>
            <person name="Cavazos I."/>
            <person name="Cavazos S.R."/>
            <person name="Ceasar H."/>
            <person name="Chacko J."/>
            <person name="Chan S.N."/>
            <person name="Chavez D."/>
            <person name="Christopoulos C."/>
            <person name="Chu J."/>
            <person name="Cockrell R."/>
            <person name="Cox C.D."/>
            <person name="Dang M."/>
            <person name="Dathorne S.R."/>
            <person name="David R."/>
            <person name="Davis C.M."/>
            <person name="Davy-Carroll L."/>
            <person name="Deshazo D.R."/>
            <person name="Donlin J.E."/>
            <person name="D'Souza L."/>
            <person name="Eaves K.A."/>
            <person name="Egan A."/>
            <person name="Emery-Cohen A.J."/>
            <person name="Escotto M."/>
            <person name="Flagg N."/>
            <person name="Forbes L.D."/>
            <person name="Gabisi A.M."/>
            <person name="Garza M."/>
            <person name="Hamilton C."/>
            <person name="Henderson N."/>
            <person name="Hernandez O."/>
            <person name="Hines S."/>
            <person name="Hogues M.E."/>
            <person name="Huang M."/>
            <person name="Idlebird D.G."/>
            <person name="Johnson R."/>
            <person name="Jolivet A."/>
            <person name="Jones S."/>
            <person name="Kagan R."/>
            <person name="King L.M."/>
            <person name="Leal B."/>
            <person name="Lebow H."/>
            <person name="Lee S."/>
            <person name="LeVan J.M."/>
            <person name="Lewis L.C."/>
            <person name="London P."/>
            <person name="Lorensuhewa L.M."/>
            <person name="Loulseged H."/>
            <person name="Lovett D.A."/>
            <person name="Lucier A."/>
            <person name="Lucier R.L."/>
            <person name="Ma J."/>
            <person name="Madu R.C."/>
            <person name="Mapua P."/>
            <person name="Martindale A.D."/>
            <person name="Martinez E."/>
            <person name="Massey E."/>
            <person name="Mawhiney S."/>
            <person name="Meador M.G."/>
            <person name="Mendez S."/>
            <person name="Mercado C."/>
            <person name="Mercado I.C."/>
            <person name="Merritt C.E."/>
            <person name="Miner Z.L."/>
            <person name="Minja E."/>
            <person name="Mitchell T."/>
            <person name="Mohabbat F."/>
            <person name="Mohabbat K."/>
            <person name="Montgomery B."/>
            <person name="Moore N."/>
            <person name="Morris S."/>
            <person name="Munidasa M."/>
            <person name="Ngo R.N."/>
            <person name="Nguyen N.B."/>
            <person name="Nickerson E."/>
            <person name="Nwaokelemeh O.O."/>
            <person name="Nwokenkwo S."/>
            <person name="Obregon M."/>
            <person name="Oguh M."/>
            <person name="Oragunye N."/>
            <person name="Oviedo R.J."/>
            <person name="Parish B.J."/>
            <person name="Parker D.N."/>
            <person name="Parrish J."/>
            <person name="Parks K.L."/>
            <person name="Paul H.A."/>
            <person name="Payton B.A."/>
            <person name="Perez A."/>
            <person name="Perrin W."/>
            <person name="Pickens A."/>
            <person name="Primus E.L."/>
            <person name="Pu L.-L."/>
            <person name="Puazo M."/>
            <person name="Quiles M.M."/>
            <person name="Quiroz J.B."/>
            <person name="Rabata D."/>
            <person name="Reeves K."/>
            <person name="Ruiz S.J."/>
            <person name="Shao H."/>
            <person name="Sisson I."/>
            <person name="Sonaike T."/>
            <person name="Sorelle R.P."/>
            <person name="Sutton A.E."/>
            <person name="Svatek A.F."/>
            <person name="Svetz L.A."/>
            <person name="Tamerisa K.S."/>
            <person name="Taylor T.R."/>
            <person name="Teague B."/>
            <person name="Thomas N."/>
            <person name="Thorn R.D."/>
            <person name="Trejos Z.Y."/>
            <person name="Trevino B.K."/>
            <person name="Ukegbu O.N."/>
            <person name="Urban J.B."/>
            <person name="Vasquez L.I."/>
            <person name="Vera V.A."/>
            <person name="Villasana D.M."/>
            <person name="Wang L."/>
            <person name="Ward-Moore S."/>
            <person name="Warren J.T."/>
            <person name="Wei X."/>
            <person name="White F."/>
            <person name="Williamson A.L."/>
            <person name="Wleczyk R."/>
            <person name="Wooden H.S."/>
            <person name="Wooden S.H."/>
            <person name="Yen J."/>
            <person name="Yoon L."/>
            <person name="Yoon V."/>
            <person name="Zorrilla S.E."/>
            <person name="Nelson D."/>
            <person name="Kucherlapati R."/>
            <person name="Weinstock G."/>
            <person name="Gibbs R.A."/>
        </authorList>
    </citation>
    <scope>NUCLEOTIDE SEQUENCE [LARGE SCALE GENOMIC DNA]</scope>
</reference>
<reference key="3">
    <citation type="journal article" date="2004" name="Genome Res.">
        <title>The status, quality, and expansion of the NIH full-length cDNA project: the Mammalian Gene Collection (MGC).</title>
        <authorList>
            <consortium name="The MGC Project Team"/>
        </authorList>
    </citation>
    <scope>NUCLEOTIDE SEQUENCE [LARGE SCALE MRNA]</scope>
    <source>
        <tissue>Testis</tissue>
    </source>
</reference>
<reference key="4">
    <citation type="journal article" date="2010" name="Cell">
        <title>Quantitative interaction proteomics and genome-wide profiling of epigenetic histone marks and their readers.</title>
        <authorList>
            <person name="Vermeulen M."/>
            <person name="Eberl H.C."/>
            <person name="Matarese F."/>
            <person name="Marks H."/>
            <person name="Denissov S."/>
            <person name="Butter F."/>
            <person name="Lee K.K."/>
            <person name="Olsen J.V."/>
            <person name="Hyman A.A."/>
            <person name="Stunnenberg H.G."/>
            <person name="Mann M."/>
        </authorList>
    </citation>
    <scope>PHOSPHORYLATION AT SER-57 AND THR-80</scope>
</reference>
<evidence type="ECO:0000250" key="1">
    <source>
        <dbReference type="UniProtKB" id="P68431"/>
    </source>
</evidence>
<evidence type="ECO:0000250" key="2">
    <source>
        <dbReference type="UniProtKB" id="P68432"/>
    </source>
</evidence>
<evidence type="ECO:0000250" key="3">
    <source>
        <dbReference type="UniProtKB" id="P68433"/>
    </source>
</evidence>
<evidence type="ECO:0000250" key="4">
    <source>
        <dbReference type="UniProtKB" id="P84243"/>
    </source>
</evidence>
<evidence type="ECO:0000250" key="5">
    <source>
        <dbReference type="UniProtKB" id="Q71DI3"/>
    </source>
</evidence>
<evidence type="ECO:0000256" key="6">
    <source>
        <dbReference type="SAM" id="MobiDB-lite"/>
    </source>
</evidence>
<evidence type="ECO:0000269" key="7">
    <source>
    </source>
</evidence>
<evidence type="ECO:0000269" key="8">
    <source>
    </source>
</evidence>
<evidence type="ECO:0000305" key="9"/>
<evidence type="ECO:0000312" key="10">
    <source>
        <dbReference type="HGNC" id="HGNC:33164"/>
    </source>
</evidence>
<evidence type="ECO:0007829" key="11">
    <source>
        <dbReference type="PDB" id="2PUY"/>
    </source>
</evidence>
<evidence type="ECO:0007829" key="12">
    <source>
        <dbReference type="PDB" id="4Z5T"/>
    </source>
</evidence>